<accession>Q7PUD7</accession>
<evidence type="ECO:0000250" key="1"/>
<evidence type="ECO:0000256" key="2">
    <source>
        <dbReference type="SAM" id="MobiDB-lite"/>
    </source>
</evidence>
<evidence type="ECO:0000305" key="3"/>
<feature type="chain" id="PRO_0000305701" description="Mediator of RNA polymerase II transcription subunit 29">
    <location>
        <begin position="1"/>
        <end position="235"/>
    </location>
</feature>
<feature type="region of interest" description="Disordered" evidence="2">
    <location>
        <begin position="1"/>
        <end position="54"/>
    </location>
</feature>
<feature type="compositionally biased region" description="Low complexity" evidence="2">
    <location>
        <begin position="1"/>
        <end position="14"/>
    </location>
</feature>
<feature type="compositionally biased region" description="Gly residues" evidence="2">
    <location>
        <begin position="15"/>
        <end position="36"/>
    </location>
</feature>
<feature type="compositionally biased region" description="Low complexity" evidence="2">
    <location>
        <begin position="37"/>
        <end position="54"/>
    </location>
</feature>
<keyword id="KW-0010">Activator</keyword>
<keyword id="KW-0539">Nucleus</keyword>
<keyword id="KW-1185">Reference proteome</keyword>
<keyword id="KW-0804">Transcription</keyword>
<keyword id="KW-0805">Transcription regulation</keyword>
<name>MED29_ANOGA</name>
<gene>
    <name type="primary">ix</name>
    <name type="synonym">MED29</name>
    <name type="ORF">AGAP001237</name>
</gene>
<dbReference type="EMBL" id="AAAB01008987">
    <property type="protein sequence ID" value="EAA01705.5"/>
    <property type="molecule type" value="Genomic_DNA"/>
</dbReference>
<dbReference type="SMR" id="Q7PUD7"/>
<dbReference type="FunCoup" id="Q7PUD7">
    <property type="interactions" value="1114"/>
</dbReference>
<dbReference type="STRING" id="7165.Q7PUD7"/>
<dbReference type="PaxDb" id="7165-AGAP001237-PA"/>
<dbReference type="EnsemblMetazoa" id="AGAP001237-RA">
    <property type="protein sequence ID" value="AGAP001237-PA"/>
    <property type="gene ID" value="AGAP001237"/>
</dbReference>
<dbReference type="GeneID" id="1281934"/>
<dbReference type="KEGG" id="aga:1281934"/>
<dbReference type="CTD" id="45881"/>
<dbReference type="VEuPathDB" id="VectorBase:AGAMI1_012149"/>
<dbReference type="VEuPathDB" id="VectorBase:AGAP001237"/>
<dbReference type="eggNOG" id="ENOG502QRNJ">
    <property type="taxonomic scope" value="Eukaryota"/>
</dbReference>
<dbReference type="HOGENOM" id="CLU_101133_0_0_1"/>
<dbReference type="InParanoid" id="Q7PUD7"/>
<dbReference type="OMA" id="LCMQQCT"/>
<dbReference type="PhylomeDB" id="Q7PUD7"/>
<dbReference type="Proteomes" id="UP000007062">
    <property type="component" value="Chromosome 2R"/>
</dbReference>
<dbReference type="GO" id="GO:0016592">
    <property type="term" value="C:mediator complex"/>
    <property type="evidence" value="ECO:0000318"/>
    <property type="project" value="GO_Central"/>
</dbReference>
<dbReference type="GO" id="GO:0003712">
    <property type="term" value="F:transcription coregulator activity"/>
    <property type="evidence" value="ECO:0000318"/>
    <property type="project" value="GO_Central"/>
</dbReference>
<dbReference type="GO" id="GO:0006357">
    <property type="term" value="P:regulation of transcription by RNA polymerase II"/>
    <property type="evidence" value="ECO:0000318"/>
    <property type="project" value="GO_Central"/>
</dbReference>
<dbReference type="InterPro" id="IPR021018">
    <property type="entry name" value="Mediator_Med29_met"/>
</dbReference>
<dbReference type="PANTHER" id="PTHR28314">
    <property type="entry name" value="MEDIATOR OF RNA POLYMERASE II TRANSCRIPTION SUBUNIT 29"/>
    <property type="match status" value="1"/>
</dbReference>
<dbReference type="PANTHER" id="PTHR28314:SF1">
    <property type="entry name" value="MEDIATOR OF RNA POLYMERASE II TRANSCRIPTION SUBUNIT 29"/>
    <property type="match status" value="1"/>
</dbReference>
<dbReference type="Pfam" id="PF11568">
    <property type="entry name" value="Med29"/>
    <property type="match status" value="1"/>
</dbReference>
<proteinExistence type="inferred from homology"/>
<reference key="1">
    <citation type="journal article" date="2002" name="Science">
        <title>The genome sequence of the malaria mosquito Anopheles gambiae.</title>
        <authorList>
            <person name="Holt R.A."/>
            <person name="Subramanian G.M."/>
            <person name="Halpern A."/>
            <person name="Sutton G.G."/>
            <person name="Charlab R."/>
            <person name="Nusskern D.R."/>
            <person name="Wincker P."/>
            <person name="Clark A.G."/>
            <person name="Ribeiro J.M.C."/>
            <person name="Wides R."/>
            <person name="Salzberg S.L."/>
            <person name="Loftus B.J."/>
            <person name="Yandell M.D."/>
            <person name="Majoros W.H."/>
            <person name="Rusch D.B."/>
            <person name="Lai Z."/>
            <person name="Kraft C.L."/>
            <person name="Abril J.F."/>
            <person name="Anthouard V."/>
            <person name="Arensburger P."/>
            <person name="Atkinson P.W."/>
            <person name="Baden H."/>
            <person name="de Berardinis V."/>
            <person name="Baldwin D."/>
            <person name="Benes V."/>
            <person name="Biedler J."/>
            <person name="Blass C."/>
            <person name="Bolanos R."/>
            <person name="Boscus D."/>
            <person name="Barnstead M."/>
            <person name="Cai S."/>
            <person name="Center A."/>
            <person name="Chaturverdi K."/>
            <person name="Christophides G.K."/>
            <person name="Chrystal M.A.M."/>
            <person name="Clamp M."/>
            <person name="Cravchik A."/>
            <person name="Curwen V."/>
            <person name="Dana A."/>
            <person name="Delcher A."/>
            <person name="Dew I."/>
            <person name="Evans C.A."/>
            <person name="Flanigan M."/>
            <person name="Grundschober-Freimoser A."/>
            <person name="Friedli L."/>
            <person name="Gu Z."/>
            <person name="Guan P."/>
            <person name="Guigo R."/>
            <person name="Hillenmeyer M.E."/>
            <person name="Hladun S.L."/>
            <person name="Hogan J.R."/>
            <person name="Hong Y.S."/>
            <person name="Hoover J."/>
            <person name="Jaillon O."/>
            <person name="Ke Z."/>
            <person name="Kodira C.D."/>
            <person name="Kokoza E."/>
            <person name="Koutsos A."/>
            <person name="Letunic I."/>
            <person name="Levitsky A.A."/>
            <person name="Liang Y."/>
            <person name="Lin J.-J."/>
            <person name="Lobo N.F."/>
            <person name="Lopez J.R."/>
            <person name="Malek J.A."/>
            <person name="McIntosh T.C."/>
            <person name="Meister S."/>
            <person name="Miller J.R."/>
            <person name="Mobarry C."/>
            <person name="Mongin E."/>
            <person name="Murphy S.D."/>
            <person name="O'Brochta D.A."/>
            <person name="Pfannkoch C."/>
            <person name="Qi R."/>
            <person name="Regier M.A."/>
            <person name="Remington K."/>
            <person name="Shao H."/>
            <person name="Sharakhova M.V."/>
            <person name="Sitter C.D."/>
            <person name="Shetty J."/>
            <person name="Smith T.J."/>
            <person name="Strong R."/>
            <person name="Sun J."/>
            <person name="Thomasova D."/>
            <person name="Ton L.Q."/>
            <person name="Topalis P."/>
            <person name="Tu Z.J."/>
            <person name="Unger M.F."/>
            <person name="Walenz B."/>
            <person name="Wang A.H."/>
            <person name="Wang J."/>
            <person name="Wang M."/>
            <person name="Wang X."/>
            <person name="Woodford K.J."/>
            <person name="Wortman J.R."/>
            <person name="Wu M."/>
            <person name="Yao A."/>
            <person name="Zdobnov E.M."/>
            <person name="Zhang H."/>
            <person name="Zhao Q."/>
            <person name="Zhao S."/>
            <person name="Zhu S.C."/>
            <person name="Zhimulev I."/>
            <person name="Coluzzi M."/>
            <person name="della Torre A."/>
            <person name="Roth C.W."/>
            <person name="Louis C."/>
            <person name="Kalush F."/>
            <person name="Mural R.J."/>
            <person name="Myers E.W."/>
            <person name="Adams M.D."/>
            <person name="Smith H.O."/>
            <person name="Broder S."/>
            <person name="Gardner M.J."/>
            <person name="Fraser C.M."/>
            <person name="Birney E."/>
            <person name="Bork P."/>
            <person name="Brey P.T."/>
            <person name="Venter J.C."/>
            <person name="Weissenbach J."/>
            <person name="Kafatos F.C."/>
            <person name="Collins F.H."/>
            <person name="Hoffman S.L."/>
        </authorList>
    </citation>
    <scope>NUCLEOTIDE SEQUENCE [LARGE SCALE GENOMIC DNA]</scope>
    <source>
        <strain>PEST</strain>
    </source>
</reference>
<protein>
    <recommendedName>
        <fullName>Mediator of RNA polymerase II transcription subunit 29</fullName>
    </recommendedName>
    <alternativeName>
        <fullName>Mediator complex subunit 29</fullName>
    </alternativeName>
    <alternativeName>
        <fullName>Protein intersex</fullName>
    </alternativeName>
</protein>
<sequence length="235" mass="25782">MMNQMGMMMQQQGVGVPGGPGGVGGVGMPGPGGVGVAPGMMQSPQMQQAQQQQVQQQQVQQQQVQQQQVQQQQQQVQQQQQQQQQHSQSAQQQAQQTEKVDNISKVKVLVGPLRDALSTTIKTAAQLIQQNTLADAGSKTVDLNNAPRFDKHLEEFYSICDQIELNLKTTKLCMQQCTSSQQYLPIPVATSQPPLPETNALTYNQYLEVVKLQIGYAKDIHDTLICAAQNISPSE</sequence>
<comment type="function">
    <text evidence="1">Component of the Mediator complex, a coactivator involved in the regulated transcription of nearly all RNA polymerase II-dependent genes. Mediator functions as a bridge to convey information from gene-specific regulatory proteins to the basal RNA polymerase II transcription machinery. Mediator is recruited to promoters by direct interactions with regulatory proteins and serves as a scaffold for the assembly of a functional preinitiation complex with RNA polymerase II and the general transcription factors (By similarity).</text>
</comment>
<comment type="subunit">
    <text evidence="1">Component of the Mediator complex.</text>
</comment>
<comment type="subcellular location">
    <subcellularLocation>
        <location evidence="3">Nucleus</location>
    </subcellularLocation>
</comment>
<comment type="similarity">
    <text evidence="3">Belongs to the Mediator complex subunit 29 family.</text>
</comment>
<organism>
    <name type="scientific">Anopheles gambiae</name>
    <name type="common">African malaria mosquito</name>
    <dbReference type="NCBI Taxonomy" id="7165"/>
    <lineage>
        <taxon>Eukaryota</taxon>
        <taxon>Metazoa</taxon>
        <taxon>Ecdysozoa</taxon>
        <taxon>Arthropoda</taxon>
        <taxon>Hexapoda</taxon>
        <taxon>Insecta</taxon>
        <taxon>Pterygota</taxon>
        <taxon>Neoptera</taxon>
        <taxon>Endopterygota</taxon>
        <taxon>Diptera</taxon>
        <taxon>Nematocera</taxon>
        <taxon>Culicoidea</taxon>
        <taxon>Culicidae</taxon>
        <taxon>Anophelinae</taxon>
        <taxon>Anopheles</taxon>
    </lineage>
</organism>